<comment type="function">
    <text evidence="1">Catalyzes the interconversion of beta-pyran and beta-furan forms of D-ribose.</text>
</comment>
<comment type="catalytic activity">
    <reaction evidence="1">
        <text>beta-D-ribopyranose = beta-D-ribofuranose</text>
        <dbReference type="Rhea" id="RHEA:25432"/>
        <dbReference type="ChEBI" id="CHEBI:27476"/>
        <dbReference type="ChEBI" id="CHEBI:47002"/>
        <dbReference type="EC" id="5.4.99.62"/>
    </reaction>
</comment>
<comment type="pathway">
    <text evidence="1">Carbohydrate metabolism; D-ribose degradation; D-ribose 5-phosphate from beta-D-ribopyranose: step 1/2.</text>
</comment>
<comment type="subunit">
    <text evidence="1">Homodecamer.</text>
</comment>
<comment type="subcellular location">
    <subcellularLocation>
        <location evidence="1">Cytoplasm</location>
    </subcellularLocation>
</comment>
<comment type="similarity">
    <text evidence="1">Belongs to the RbsD / FucU family. RbsD subfamily.</text>
</comment>
<sequence length="139" mass="15292">MKKGTVLNSDISSVISRLGHTDTLVVCDAGLPIPKSTTRIDMALTQGVPSFMQVLGVVTNEMQVEAAIIAEEIKHHNPQLHETLLTHLEQLQKHQGNTIEIRYTTHEQFKQQTAESQAVIRSGECSPYANIILCAGVTF</sequence>
<proteinExistence type="inferred from homology"/>
<gene>
    <name evidence="1" type="primary">rbsD</name>
    <name type="ordered locus">BWG_3439</name>
</gene>
<keyword id="KW-0119">Carbohydrate metabolism</keyword>
<keyword id="KW-0963">Cytoplasm</keyword>
<keyword id="KW-0413">Isomerase</keyword>
<reference key="1">
    <citation type="journal article" date="2009" name="J. Bacteriol.">
        <title>Genomic sequencing reveals regulatory mutations and recombinational events in the widely used MC4100 lineage of Escherichia coli K-12.</title>
        <authorList>
            <person name="Ferenci T."/>
            <person name="Zhou Z."/>
            <person name="Betteridge T."/>
            <person name="Ren Y."/>
            <person name="Liu Y."/>
            <person name="Feng L."/>
            <person name="Reeves P.R."/>
            <person name="Wang L."/>
        </authorList>
    </citation>
    <scope>NUCLEOTIDE SEQUENCE [LARGE SCALE GENOMIC DNA]</scope>
    <source>
        <strain>K12 / MC4100 / BW2952</strain>
    </source>
</reference>
<evidence type="ECO:0000255" key="1">
    <source>
        <dbReference type="HAMAP-Rule" id="MF_01661"/>
    </source>
</evidence>
<accession>C4ZZ26</accession>
<name>RBSD_ECOBW</name>
<dbReference type="EC" id="5.4.99.62" evidence="1"/>
<dbReference type="EMBL" id="CP001396">
    <property type="protein sequence ID" value="ACR64218.1"/>
    <property type="molecule type" value="Genomic_DNA"/>
</dbReference>
<dbReference type="RefSeq" id="WP_001301979.1">
    <property type="nucleotide sequence ID" value="NC_012759.1"/>
</dbReference>
<dbReference type="SMR" id="C4ZZ26"/>
<dbReference type="GeneID" id="75173982"/>
<dbReference type="KEGG" id="ebw:BWG_3439"/>
<dbReference type="HOGENOM" id="CLU_135498_0_0_6"/>
<dbReference type="UniPathway" id="UPA00916">
    <property type="reaction ID" value="UER00888"/>
</dbReference>
<dbReference type="GO" id="GO:0005829">
    <property type="term" value="C:cytosol"/>
    <property type="evidence" value="ECO:0007669"/>
    <property type="project" value="TreeGrafter"/>
</dbReference>
<dbReference type="GO" id="GO:0062193">
    <property type="term" value="F:D-ribose pyranase activity"/>
    <property type="evidence" value="ECO:0007669"/>
    <property type="project" value="UniProtKB-EC"/>
</dbReference>
<dbReference type="GO" id="GO:0016872">
    <property type="term" value="F:intramolecular lyase activity"/>
    <property type="evidence" value="ECO:0007669"/>
    <property type="project" value="UniProtKB-UniRule"/>
</dbReference>
<dbReference type="GO" id="GO:0048029">
    <property type="term" value="F:monosaccharide binding"/>
    <property type="evidence" value="ECO:0007669"/>
    <property type="project" value="InterPro"/>
</dbReference>
<dbReference type="GO" id="GO:0019303">
    <property type="term" value="P:D-ribose catabolic process"/>
    <property type="evidence" value="ECO:0007669"/>
    <property type="project" value="UniProtKB-UniRule"/>
</dbReference>
<dbReference type="FunFam" id="3.40.1650.10:FF:000002">
    <property type="entry name" value="D-ribose pyranase"/>
    <property type="match status" value="1"/>
</dbReference>
<dbReference type="Gene3D" id="3.40.1650.10">
    <property type="entry name" value="RbsD-like domain"/>
    <property type="match status" value="1"/>
</dbReference>
<dbReference type="HAMAP" id="MF_01661">
    <property type="entry name" value="D_rib_pyranase"/>
    <property type="match status" value="1"/>
</dbReference>
<dbReference type="InterPro" id="IPR023064">
    <property type="entry name" value="D-ribose_pyranase"/>
</dbReference>
<dbReference type="InterPro" id="IPR023750">
    <property type="entry name" value="RbsD-like_sf"/>
</dbReference>
<dbReference type="InterPro" id="IPR007721">
    <property type="entry name" value="RbsD_FucU"/>
</dbReference>
<dbReference type="NCBIfam" id="NF008761">
    <property type="entry name" value="PRK11797.1"/>
    <property type="match status" value="1"/>
</dbReference>
<dbReference type="PANTHER" id="PTHR37831">
    <property type="entry name" value="D-RIBOSE PYRANASE"/>
    <property type="match status" value="1"/>
</dbReference>
<dbReference type="PANTHER" id="PTHR37831:SF1">
    <property type="entry name" value="D-RIBOSE PYRANASE"/>
    <property type="match status" value="1"/>
</dbReference>
<dbReference type="Pfam" id="PF05025">
    <property type="entry name" value="RbsD_FucU"/>
    <property type="match status" value="1"/>
</dbReference>
<dbReference type="SUPFAM" id="SSF102546">
    <property type="entry name" value="RbsD-like"/>
    <property type="match status" value="1"/>
</dbReference>
<feature type="chain" id="PRO_1000215864" description="D-ribose pyranase">
    <location>
        <begin position="1"/>
        <end position="139"/>
    </location>
</feature>
<feature type="active site" description="Proton donor" evidence="1">
    <location>
        <position position="20"/>
    </location>
</feature>
<feature type="binding site" evidence="1">
    <location>
        <position position="28"/>
    </location>
    <ligand>
        <name>substrate</name>
    </ligand>
</feature>
<feature type="binding site" evidence="1">
    <location>
        <position position="106"/>
    </location>
    <ligand>
        <name>substrate</name>
    </ligand>
</feature>
<feature type="binding site" evidence="1">
    <location>
        <begin position="128"/>
        <end position="130"/>
    </location>
    <ligand>
        <name>substrate</name>
    </ligand>
</feature>
<protein>
    <recommendedName>
        <fullName evidence="1">D-ribose pyranase</fullName>
        <ecNumber evidence="1">5.4.99.62</ecNumber>
    </recommendedName>
</protein>
<organism>
    <name type="scientific">Escherichia coli (strain K12 / MC4100 / BW2952)</name>
    <dbReference type="NCBI Taxonomy" id="595496"/>
    <lineage>
        <taxon>Bacteria</taxon>
        <taxon>Pseudomonadati</taxon>
        <taxon>Pseudomonadota</taxon>
        <taxon>Gammaproteobacteria</taxon>
        <taxon>Enterobacterales</taxon>
        <taxon>Enterobacteriaceae</taxon>
        <taxon>Escherichia</taxon>
    </lineage>
</organism>